<organism>
    <name type="scientific">Yersinia pseudotuberculosis serotype IB (strain PB1/+)</name>
    <dbReference type="NCBI Taxonomy" id="502801"/>
    <lineage>
        <taxon>Bacteria</taxon>
        <taxon>Pseudomonadati</taxon>
        <taxon>Pseudomonadota</taxon>
        <taxon>Gammaproteobacteria</taxon>
        <taxon>Enterobacterales</taxon>
        <taxon>Yersiniaceae</taxon>
        <taxon>Yersinia</taxon>
    </lineage>
</organism>
<gene>
    <name evidence="1" type="primary">gpsA</name>
    <name type="ordered locus">YPTS_0066</name>
</gene>
<keyword id="KW-0963">Cytoplasm</keyword>
<keyword id="KW-0444">Lipid biosynthesis</keyword>
<keyword id="KW-0443">Lipid metabolism</keyword>
<keyword id="KW-0520">NAD</keyword>
<keyword id="KW-0521">NADP</keyword>
<keyword id="KW-0547">Nucleotide-binding</keyword>
<keyword id="KW-0560">Oxidoreductase</keyword>
<keyword id="KW-0594">Phospholipid biosynthesis</keyword>
<keyword id="KW-1208">Phospholipid metabolism</keyword>
<dbReference type="EC" id="1.1.1.94" evidence="1"/>
<dbReference type="EMBL" id="CP001048">
    <property type="protein sequence ID" value="ACC87065.1"/>
    <property type="molecule type" value="Genomic_DNA"/>
</dbReference>
<dbReference type="RefSeq" id="WP_002208975.1">
    <property type="nucleotide sequence ID" value="NZ_CP009780.1"/>
</dbReference>
<dbReference type="SMR" id="B2JYQ1"/>
<dbReference type="GeneID" id="57974523"/>
<dbReference type="KEGG" id="ypb:YPTS_0066"/>
<dbReference type="PATRIC" id="fig|502801.10.peg.3742"/>
<dbReference type="UniPathway" id="UPA00940"/>
<dbReference type="GO" id="GO:0005829">
    <property type="term" value="C:cytosol"/>
    <property type="evidence" value="ECO:0007669"/>
    <property type="project" value="TreeGrafter"/>
</dbReference>
<dbReference type="GO" id="GO:0047952">
    <property type="term" value="F:glycerol-3-phosphate dehydrogenase [NAD(P)+] activity"/>
    <property type="evidence" value="ECO:0007669"/>
    <property type="project" value="UniProtKB-UniRule"/>
</dbReference>
<dbReference type="GO" id="GO:0051287">
    <property type="term" value="F:NAD binding"/>
    <property type="evidence" value="ECO:0007669"/>
    <property type="project" value="InterPro"/>
</dbReference>
<dbReference type="GO" id="GO:0005975">
    <property type="term" value="P:carbohydrate metabolic process"/>
    <property type="evidence" value="ECO:0007669"/>
    <property type="project" value="InterPro"/>
</dbReference>
<dbReference type="GO" id="GO:0046167">
    <property type="term" value="P:glycerol-3-phosphate biosynthetic process"/>
    <property type="evidence" value="ECO:0007669"/>
    <property type="project" value="UniProtKB-UniRule"/>
</dbReference>
<dbReference type="GO" id="GO:0046168">
    <property type="term" value="P:glycerol-3-phosphate catabolic process"/>
    <property type="evidence" value="ECO:0007669"/>
    <property type="project" value="InterPro"/>
</dbReference>
<dbReference type="GO" id="GO:0046474">
    <property type="term" value="P:glycerophospholipid biosynthetic process"/>
    <property type="evidence" value="ECO:0007669"/>
    <property type="project" value="TreeGrafter"/>
</dbReference>
<dbReference type="FunFam" id="1.10.1040.10:FF:000001">
    <property type="entry name" value="Glycerol-3-phosphate dehydrogenase [NAD(P)+]"/>
    <property type="match status" value="1"/>
</dbReference>
<dbReference type="FunFam" id="3.40.50.720:FF:000019">
    <property type="entry name" value="Glycerol-3-phosphate dehydrogenase [NAD(P)+]"/>
    <property type="match status" value="1"/>
</dbReference>
<dbReference type="Gene3D" id="1.10.1040.10">
    <property type="entry name" value="N-(1-d-carboxylethyl)-l-norvaline Dehydrogenase, domain 2"/>
    <property type="match status" value="1"/>
</dbReference>
<dbReference type="Gene3D" id="3.40.50.720">
    <property type="entry name" value="NAD(P)-binding Rossmann-like Domain"/>
    <property type="match status" value="1"/>
</dbReference>
<dbReference type="HAMAP" id="MF_00394">
    <property type="entry name" value="NAD_Glyc3P_dehydrog"/>
    <property type="match status" value="1"/>
</dbReference>
<dbReference type="InterPro" id="IPR008927">
    <property type="entry name" value="6-PGluconate_DH-like_C_sf"/>
</dbReference>
<dbReference type="InterPro" id="IPR013328">
    <property type="entry name" value="6PGD_dom2"/>
</dbReference>
<dbReference type="InterPro" id="IPR006168">
    <property type="entry name" value="G3P_DH_NAD-dep"/>
</dbReference>
<dbReference type="InterPro" id="IPR006109">
    <property type="entry name" value="G3P_DH_NAD-dep_C"/>
</dbReference>
<dbReference type="InterPro" id="IPR011128">
    <property type="entry name" value="G3P_DH_NAD-dep_N"/>
</dbReference>
<dbReference type="InterPro" id="IPR036291">
    <property type="entry name" value="NAD(P)-bd_dom_sf"/>
</dbReference>
<dbReference type="NCBIfam" id="NF000939">
    <property type="entry name" value="PRK00094.1-1"/>
    <property type="match status" value="1"/>
</dbReference>
<dbReference type="NCBIfam" id="NF000940">
    <property type="entry name" value="PRK00094.1-2"/>
    <property type="match status" value="1"/>
</dbReference>
<dbReference type="NCBIfam" id="NF000942">
    <property type="entry name" value="PRK00094.1-4"/>
    <property type="match status" value="1"/>
</dbReference>
<dbReference type="PANTHER" id="PTHR11728">
    <property type="entry name" value="GLYCEROL-3-PHOSPHATE DEHYDROGENASE"/>
    <property type="match status" value="1"/>
</dbReference>
<dbReference type="PANTHER" id="PTHR11728:SF1">
    <property type="entry name" value="GLYCEROL-3-PHOSPHATE DEHYDROGENASE [NAD(+)] 2, CHLOROPLASTIC"/>
    <property type="match status" value="1"/>
</dbReference>
<dbReference type="Pfam" id="PF07479">
    <property type="entry name" value="NAD_Gly3P_dh_C"/>
    <property type="match status" value="1"/>
</dbReference>
<dbReference type="Pfam" id="PF01210">
    <property type="entry name" value="NAD_Gly3P_dh_N"/>
    <property type="match status" value="1"/>
</dbReference>
<dbReference type="PIRSF" id="PIRSF000114">
    <property type="entry name" value="Glycerol-3-P_dh"/>
    <property type="match status" value="1"/>
</dbReference>
<dbReference type="PRINTS" id="PR00077">
    <property type="entry name" value="GPDHDRGNASE"/>
</dbReference>
<dbReference type="SUPFAM" id="SSF48179">
    <property type="entry name" value="6-phosphogluconate dehydrogenase C-terminal domain-like"/>
    <property type="match status" value="1"/>
</dbReference>
<dbReference type="SUPFAM" id="SSF51735">
    <property type="entry name" value="NAD(P)-binding Rossmann-fold domains"/>
    <property type="match status" value="1"/>
</dbReference>
<dbReference type="PROSITE" id="PS00957">
    <property type="entry name" value="NAD_G3PDH"/>
    <property type="match status" value="1"/>
</dbReference>
<sequence>MNTNPASMAVIGAGSYGTALAITLARNGHQVVLWGHDPKHIQQLQQDRCNRAFLPDAAFPDTLRLETDLACALAASRDVLVVVPSHVFGAVLHQLKPHLRKDARIVWATKGLEAETGRLLQDVAREVLGEAIPLAVISGPTFAKELAAGLPTAIALASTDVQFSEDLQQLLHCGKSFRVYSNPDFIGVQLGGAVKNVIAIGAGMSDGIGFGANARTALITRGLAEMTRLGTALGADPSTFMGMAGLGDLVLTCTDNQSRNRRFGIMLGQGLGVKEAQDNIGQVVEGYRNTKEVLALAQRHGVEMPITEQIYQVLYCHKNAREAALTLLGRTKKDEKIGI</sequence>
<proteinExistence type="inferred from homology"/>
<name>GPDA_YERPB</name>
<comment type="function">
    <text evidence="1">Catalyzes the reduction of the glycolytic intermediate dihydroxyacetone phosphate (DHAP) to sn-glycerol 3-phosphate (G3P), the key precursor for phospholipid synthesis.</text>
</comment>
<comment type="catalytic activity">
    <reaction evidence="1">
        <text>sn-glycerol 3-phosphate + NAD(+) = dihydroxyacetone phosphate + NADH + H(+)</text>
        <dbReference type="Rhea" id="RHEA:11092"/>
        <dbReference type="ChEBI" id="CHEBI:15378"/>
        <dbReference type="ChEBI" id="CHEBI:57540"/>
        <dbReference type="ChEBI" id="CHEBI:57597"/>
        <dbReference type="ChEBI" id="CHEBI:57642"/>
        <dbReference type="ChEBI" id="CHEBI:57945"/>
        <dbReference type="EC" id="1.1.1.94"/>
    </reaction>
    <physiologicalReaction direction="right-to-left" evidence="1">
        <dbReference type="Rhea" id="RHEA:11094"/>
    </physiologicalReaction>
</comment>
<comment type="catalytic activity">
    <reaction evidence="1">
        <text>sn-glycerol 3-phosphate + NADP(+) = dihydroxyacetone phosphate + NADPH + H(+)</text>
        <dbReference type="Rhea" id="RHEA:11096"/>
        <dbReference type="ChEBI" id="CHEBI:15378"/>
        <dbReference type="ChEBI" id="CHEBI:57597"/>
        <dbReference type="ChEBI" id="CHEBI:57642"/>
        <dbReference type="ChEBI" id="CHEBI:57783"/>
        <dbReference type="ChEBI" id="CHEBI:58349"/>
        <dbReference type="EC" id="1.1.1.94"/>
    </reaction>
    <physiologicalReaction direction="right-to-left" evidence="1">
        <dbReference type="Rhea" id="RHEA:11098"/>
    </physiologicalReaction>
</comment>
<comment type="pathway">
    <text evidence="1">Membrane lipid metabolism; glycerophospholipid metabolism.</text>
</comment>
<comment type="subcellular location">
    <subcellularLocation>
        <location evidence="1">Cytoplasm</location>
    </subcellularLocation>
</comment>
<comment type="similarity">
    <text evidence="1">Belongs to the NAD-dependent glycerol-3-phosphate dehydrogenase family.</text>
</comment>
<evidence type="ECO:0000255" key="1">
    <source>
        <dbReference type="HAMAP-Rule" id="MF_00394"/>
    </source>
</evidence>
<accession>B2JYQ1</accession>
<feature type="chain" id="PRO_1000123206" description="Glycerol-3-phosphate dehydrogenase [NAD(P)+]">
    <location>
        <begin position="1"/>
        <end position="339"/>
    </location>
</feature>
<feature type="active site" description="Proton acceptor" evidence="1">
    <location>
        <position position="195"/>
    </location>
</feature>
<feature type="binding site" evidence="1">
    <location>
        <position position="15"/>
    </location>
    <ligand>
        <name>NADPH</name>
        <dbReference type="ChEBI" id="CHEBI:57783"/>
    </ligand>
</feature>
<feature type="binding site" evidence="1">
    <location>
        <position position="16"/>
    </location>
    <ligand>
        <name>NADPH</name>
        <dbReference type="ChEBI" id="CHEBI:57783"/>
    </ligand>
</feature>
<feature type="binding site" evidence="1">
    <location>
        <position position="36"/>
    </location>
    <ligand>
        <name>NADPH</name>
        <dbReference type="ChEBI" id="CHEBI:57783"/>
    </ligand>
</feature>
<feature type="binding site" evidence="1">
    <location>
        <position position="110"/>
    </location>
    <ligand>
        <name>NADPH</name>
        <dbReference type="ChEBI" id="CHEBI:57783"/>
    </ligand>
</feature>
<feature type="binding site" evidence="1">
    <location>
        <position position="110"/>
    </location>
    <ligand>
        <name>sn-glycerol 3-phosphate</name>
        <dbReference type="ChEBI" id="CHEBI:57597"/>
    </ligand>
</feature>
<feature type="binding site" evidence="1">
    <location>
        <position position="139"/>
    </location>
    <ligand>
        <name>sn-glycerol 3-phosphate</name>
        <dbReference type="ChEBI" id="CHEBI:57597"/>
    </ligand>
</feature>
<feature type="binding site" evidence="1">
    <location>
        <position position="141"/>
    </location>
    <ligand>
        <name>sn-glycerol 3-phosphate</name>
        <dbReference type="ChEBI" id="CHEBI:57597"/>
    </ligand>
</feature>
<feature type="binding site" evidence="1">
    <location>
        <position position="143"/>
    </location>
    <ligand>
        <name>NADPH</name>
        <dbReference type="ChEBI" id="CHEBI:57783"/>
    </ligand>
</feature>
<feature type="binding site" evidence="1">
    <location>
        <position position="195"/>
    </location>
    <ligand>
        <name>sn-glycerol 3-phosphate</name>
        <dbReference type="ChEBI" id="CHEBI:57597"/>
    </ligand>
</feature>
<feature type="binding site" evidence="1">
    <location>
        <position position="248"/>
    </location>
    <ligand>
        <name>sn-glycerol 3-phosphate</name>
        <dbReference type="ChEBI" id="CHEBI:57597"/>
    </ligand>
</feature>
<feature type="binding site" evidence="1">
    <location>
        <position position="258"/>
    </location>
    <ligand>
        <name>sn-glycerol 3-phosphate</name>
        <dbReference type="ChEBI" id="CHEBI:57597"/>
    </ligand>
</feature>
<feature type="binding site" evidence="1">
    <location>
        <position position="259"/>
    </location>
    <ligand>
        <name>NADPH</name>
        <dbReference type="ChEBI" id="CHEBI:57783"/>
    </ligand>
</feature>
<feature type="binding site" evidence="1">
    <location>
        <position position="259"/>
    </location>
    <ligand>
        <name>sn-glycerol 3-phosphate</name>
        <dbReference type="ChEBI" id="CHEBI:57597"/>
    </ligand>
</feature>
<feature type="binding site" evidence="1">
    <location>
        <position position="260"/>
    </location>
    <ligand>
        <name>sn-glycerol 3-phosphate</name>
        <dbReference type="ChEBI" id="CHEBI:57597"/>
    </ligand>
</feature>
<feature type="binding site" evidence="1">
    <location>
        <position position="283"/>
    </location>
    <ligand>
        <name>NADPH</name>
        <dbReference type="ChEBI" id="CHEBI:57783"/>
    </ligand>
</feature>
<feature type="binding site" evidence="1">
    <location>
        <position position="285"/>
    </location>
    <ligand>
        <name>NADPH</name>
        <dbReference type="ChEBI" id="CHEBI:57783"/>
    </ligand>
</feature>
<protein>
    <recommendedName>
        <fullName evidence="1">Glycerol-3-phosphate dehydrogenase [NAD(P)+]</fullName>
        <ecNumber evidence="1">1.1.1.94</ecNumber>
    </recommendedName>
    <alternativeName>
        <fullName evidence="1">NAD(P)(+)-dependent glycerol-3-phosphate dehydrogenase</fullName>
    </alternativeName>
    <alternativeName>
        <fullName evidence="1">NAD(P)H-dependent dihydroxyacetone-phosphate reductase</fullName>
    </alternativeName>
</protein>
<reference key="1">
    <citation type="submission" date="2008-04" db="EMBL/GenBank/DDBJ databases">
        <title>Complete sequence of Yersinia pseudotuberculosis PB1/+.</title>
        <authorList>
            <person name="Copeland A."/>
            <person name="Lucas S."/>
            <person name="Lapidus A."/>
            <person name="Glavina del Rio T."/>
            <person name="Dalin E."/>
            <person name="Tice H."/>
            <person name="Bruce D."/>
            <person name="Goodwin L."/>
            <person name="Pitluck S."/>
            <person name="Munk A.C."/>
            <person name="Brettin T."/>
            <person name="Detter J.C."/>
            <person name="Han C."/>
            <person name="Tapia R."/>
            <person name="Schmutz J."/>
            <person name="Larimer F."/>
            <person name="Land M."/>
            <person name="Hauser L."/>
            <person name="Challacombe J.F."/>
            <person name="Green L."/>
            <person name="Lindler L.E."/>
            <person name="Nikolich M.P."/>
            <person name="Richardson P."/>
        </authorList>
    </citation>
    <scope>NUCLEOTIDE SEQUENCE [LARGE SCALE GENOMIC DNA]</scope>
    <source>
        <strain>PB1/+</strain>
    </source>
</reference>